<comment type="function">
    <text evidence="2">Catalyzes the interconversion of L-alanine and D-alanine. This organism is able to use both L- and D-alanine as a nitrogen source. May also prevent D-alanine from interfering with the use of L-alanine.</text>
</comment>
<comment type="catalytic activity">
    <reaction evidence="1">
        <text>L-alanine = D-alanine</text>
        <dbReference type="Rhea" id="RHEA:20249"/>
        <dbReference type="ChEBI" id="CHEBI:57416"/>
        <dbReference type="ChEBI" id="CHEBI:57972"/>
        <dbReference type="EC" id="5.1.1.1"/>
    </reaction>
</comment>
<comment type="cofactor">
    <cofactor evidence="1">
        <name>pyridoxal 5'-phosphate</name>
        <dbReference type="ChEBI" id="CHEBI:597326"/>
    </cofactor>
</comment>
<comment type="pathway">
    <text evidence="1">Amino-acid biosynthesis; D-alanine biosynthesis; D-alanine from L-alanine: step 1/1.</text>
</comment>
<comment type="disruption phenotype">
    <text evidence="2">No growth on D-alanine, however able to grow on L-alanine. Slower than wild-type growth on a mix of alanine isomers.</text>
</comment>
<comment type="similarity">
    <text evidence="1">Belongs to the alanine racemase family.</text>
</comment>
<feature type="chain" id="PRO_0000415442" description="Alanine racemase">
    <location>
        <begin position="1"/>
        <end position="373"/>
    </location>
</feature>
<feature type="active site" description="Proton acceptor; specific for D-alanine" evidence="1">
    <location>
        <position position="37"/>
    </location>
</feature>
<feature type="active site" description="Proton acceptor; specific for L-alanine" evidence="1">
    <location>
        <position position="266"/>
    </location>
</feature>
<feature type="binding site" evidence="1">
    <location>
        <position position="135"/>
    </location>
    <ligand>
        <name>substrate</name>
    </ligand>
</feature>
<feature type="binding site" evidence="1">
    <location>
        <position position="313"/>
    </location>
    <ligand>
        <name>substrate</name>
    </ligand>
</feature>
<feature type="modified residue" description="N6-(pyridoxal phosphate)lysine" evidence="1">
    <location>
        <position position="37"/>
    </location>
</feature>
<gene>
    <name type="primary">alr</name>
    <name type="ordered locus">MMP1512</name>
</gene>
<evidence type="ECO:0000255" key="1">
    <source>
        <dbReference type="HAMAP-Rule" id="MF_01201"/>
    </source>
</evidence>
<evidence type="ECO:0000269" key="2">
    <source>
    </source>
</evidence>
<sequence>MVSHPIWAEIDLSAIKNNIKEIRRITNPKSQVMAVVKANAYGHGSVEVSKICLENGADRLAVARSTEALELRDAGITCPILVFGYVTEEEILKMVENDITLTVYSLEIANSIQKIAEKLGKHSKIHIKVDTGMSRLGFLPEKSSVETIKKIRELENIEVEGIYTHFADADNSDKTYTTMQFSKFTSFLHDLEENGIDIPIKHASNSAAIIDHPETHLNMVRPGIILYGLYPSELVHKERINLQPAMSLKVLVTHVKDVPENTKISYGCTFETKKQSKIASLPIGYADGFTRMLRNGNVLIHGLRVPVVGRICMDQCMIDVTSIENVNVGDVVTVFGKDGTEKISIEEFGNKLGTINYELVCMVSARVPRIYLH</sequence>
<name>ALR_METMP</name>
<reference key="1">
    <citation type="journal article" date="2004" name="J. Bacteriol.">
        <title>Complete genome sequence of the genetically tractable hydrogenotrophic methanogen Methanococcus maripaludis.</title>
        <authorList>
            <person name="Hendrickson E.L."/>
            <person name="Kaul R."/>
            <person name="Zhou Y."/>
            <person name="Bovee D."/>
            <person name="Chapman P."/>
            <person name="Chung J."/>
            <person name="Conway de Macario E."/>
            <person name="Dodsworth J.A."/>
            <person name="Gillett W."/>
            <person name="Graham D.E."/>
            <person name="Hackett M."/>
            <person name="Haydock A.K."/>
            <person name="Kang A."/>
            <person name="Land M.L."/>
            <person name="Levy R."/>
            <person name="Lie T.J."/>
            <person name="Major T.A."/>
            <person name="Moore B.C."/>
            <person name="Porat I."/>
            <person name="Palmeiri A."/>
            <person name="Rouse G."/>
            <person name="Saenphimmachak C."/>
            <person name="Soell D."/>
            <person name="Van Dien S."/>
            <person name="Wang T."/>
            <person name="Whitman W.B."/>
            <person name="Xia Q."/>
            <person name="Zhang Y."/>
            <person name="Larimer F.W."/>
            <person name="Olson M.V."/>
            <person name="Leigh J.A."/>
        </authorList>
    </citation>
    <scope>NUCLEOTIDE SEQUENCE [LARGE SCALE GENOMIC DNA]</scope>
    <source>
        <strain>DSM 14266 / JCM 13030 / NBRC 101832 / S2 / LL</strain>
    </source>
</reference>
<reference key="2">
    <citation type="journal article" date="2005" name="J. Bacteriol.">
        <title>Markerless mutagenesis in Methanococcus maripaludis demonstrates roles for alanine dehydrogenase, alanine racemase, and alanine permease.</title>
        <authorList>
            <person name="Moore B.C."/>
            <person name="Leigh J.A."/>
        </authorList>
    </citation>
    <scope>FUNCTION</scope>
    <scope>DISRUPTION PHENOTYPE</scope>
    <source>
        <strain>DSM 14266 / JCM 13030 / NBRC 101832 / S2 / LL</strain>
    </source>
</reference>
<accession>Q6LX41</accession>
<proteinExistence type="inferred from homology"/>
<keyword id="KW-0413">Isomerase</keyword>
<keyword id="KW-0663">Pyridoxal phosphate</keyword>
<keyword id="KW-1185">Reference proteome</keyword>
<dbReference type="EC" id="5.1.1.1" evidence="1"/>
<dbReference type="EMBL" id="BX950229">
    <property type="protein sequence ID" value="CAF31068.1"/>
    <property type="molecule type" value="Genomic_DNA"/>
</dbReference>
<dbReference type="RefSeq" id="WP_011171456.1">
    <property type="nucleotide sequence ID" value="NC_005791.1"/>
</dbReference>
<dbReference type="SMR" id="Q6LX41"/>
<dbReference type="STRING" id="267377.MMP1512"/>
<dbReference type="EnsemblBacteria" id="CAF31068">
    <property type="protein sequence ID" value="CAF31068"/>
    <property type="gene ID" value="MMP1512"/>
</dbReference>
<dbReference type="GeneID" id="2761062"/>
<dbReference type="KEGG" id="mmp:MMP1512"/>
<dbReference type="PATRIC" id="fig|267377.15.peg.1549"/>
<dbReference type="eggNOG" id="arCOG06677">
    <property type="taxonomic scope" value="Archaea"/>
</dbReference>
<dbReference type="HOGENOM" id="CLU_028393_2_2_2"/>
<dbReference type="OrthoDB" id="59583at2157"/>
<dbReference type="UniPathway" id="UPA00042">
    <property type="reaction ID" value="UER00497"/>
</dbReference>
<dbReference type="Proteomes" id="UP000000590">
    <property type="component" value="Chromosome"/>
</dbReference>
<dbReference type="GO" id="GO:0005829">
    <property type="term" value="C:cytosol"/>
    <property type="evidence" value="ECO:0007669"/>
    <property type="project" value="TreeGrafter"/>
</dbReference>
<dbReference type="GO" id="GO:0008784">
    <property type="term" value="F:alanine racemase activity"/>
    <property type="evidence" value="ECO:0007669"/>
    <property type="project" value="UniProtKB-UniRule"/>
</dbReference>
<dbReference type="GO" id="GO:0030170">
    <property type="term" value="F:pyridoxal phosphate binding"/>
    <property type="evidence" value="ECO:0007669"/>
    <property type="project" value="UniProtKB-UniRule"/>
</dbReference>
<dbReference type="GO" id="GO:0030632">
    <property type="term" value="P:D-alanine biosynthetic process"/>
    <property type="evidence" value="ECO:0007669"/>
    <property type="project" value="UniProtKB-UniRule"/>
</dbReference>
<dbReference type="CDD" id="cd00430">
    <property type="entry name" value="PLPDE_III_AR"/>
    <property type="match status" value="1"/>
</dbReference>
<dbReference type="FunFam" id="2.40.37.10:FF:000006">
    <property type="entry name" value="Alanine racemase"/>
    <property type="match status" value="1"/>
</dbReference>
<dbReference type="FunFam" id="3.20.20.10:FF:000002">
    <property type="entry name" value="Alanine racemase"/>
    <property type="match status" value="1"/>
</dbReference>
<dbReference type="Gene3D" id="3.20.20.10">
    <property type="entry name" value="Alanine racemase"/>
    <property type="match status" value="1"/>
</dbReference>
<dbReference type="Gene3D" id="2.40.37.10">
    <property type="entry name" value="Lyase, Ornithine Decarboxylase, Chain A, domain 1"/>
    <property type="match status" value="1"/>
</dbReference>
<dbReference type="HAMAP" id="MF_01201">
    <property type="entry name" value="Ala_racemase"/>
    <property type="match status" value="1"/>
</dbReference>
<dbReference type="InterPro" id="IPR000821">
    <property type="entry name" value="Ala_racemase"/>
</dbReference>
<dbReference type="InterPro" id="IPR009006">
    <property type="entry name" value="Ala_racemase/Decarboxylase_C"/>
</dbReference>
<dbReference type="InterPro" id="IPR011079">
    <property type="entry name" value="Ala_racemase_C"/>
</dbReference>
<dbReference type="InterPro" id="IPR001608">
    <property type="entry name" value="Ala_racemase_N"/>
</dbReference>
<dbReference type="InterPro" id="IPR020622">
    <property type="entry name" value="Ala_racemase_pyridoxalP-BS"/>
</dbReference>
<dbReference type="InterPro" id="IPR029066">
    <property type="entry name" value="PLP-binding_barrel"/>
</dbReference>
<dbReference type="NCBIfam" id="TIGR00492">
    <property type="entry name" value="alr"/>
    <property type="match status" value="1"/>
</dbReference>
<dbReference type="PANTHER" id="PTHR30511">
    <property type="entry name" value="ALANINE RACEMASE"/>
    <property type="match status" value="1"/>
</dbReference>
<dbReference type="PANTHER" id="PTHR30511:SF0">
    <property type="entry name" value="ALANINE RACEMASE, CATABOLIC-RELATED"/>
    <property type="match status" value="1"/>
</dbReference>
<dbReference type="Pfam" id="PF00842">
    <property type="entry name" value="Ala_racemase_C"/>
    <property type="match status" value="1"/>
</dbReference>
<dbReference type="Pfam" id="PF01168">
    <property type="entry name" value="Ala_racemase_N"/>
    <property type="match status" value="1"/>
</dbReference>
<dbReference type="PRINTS" id="PR00992">
    <property type="entry name" value="ALARACEMASE"/>
</dbReference>
<dbReference type="SMART" id="SM01005">
    <property type="entry name" value="Ala_racemase_C"/>
    <property type="match status" value="1"/>
</dbReference>
<dbReference type="SUPFAM" id="SSF50621">
    <property type="entry name" value="Alanine racemase C-terminal domain-like"/>
    <property type="match status" value="1"/>
</dbReference>
<dbReference type="SUPFAM" id="SSF51419">
    <property type="entry name" value="PLP-binding barrel"/>
    <property type="match status" value="1"/>
</dbReference>
<dbReference type="PROSITE" id="PS00395">
    <property type="entry name" value="ALANINE_RACEMASE"/>
    <property type="match status" value="1"/>
</dbReference>
<organism>
    <name type="scientific">Methanococcus maripaludis (strain DSM 14266 / JCM 13030 / NBRC 101832 / S2 / LL)</name>
    <dbReference type="NCBI Taxonomy" id="267377"/>
    <lineage>
        <taxon>Archaea</taxon>
        <taxon>Methanobacteriati</taxon>
        <taxon>Methanobacteriota</taxon>
        <taxon>Methanomada group</taxon>
        <taxon>Methanococci</taxon>
        <taxon>Methanococcales</taxon>
        <taxon>Methanococcaceae</taxon>
        <taxon>Methanococcus</taxon>
    </lineage>
</organism>
<protein>
    <recommendedName>
        <fullName evidence="1">Alanine racemase</fullName>
        <ecNumber evidence="1">5.1.1.1</ecNumber>
    </recommendedName>
</protein>